<comment type="similarity">
    <text evidence="1">Belongs to the UPF0309 family.</text>
</comment>
<proteinExistence type="inferred from homology"/>
<organism>
    <name type="scientific">Brucella abortus biovar 1 (strain 9-941)</name>
    <dbReference type="NCBI Taxonomy" id="262698"/>
    <lineage>
        <taxon>Bacteria</taxon>
        <taxon>Pseudomonadati</taxon>
        <taxon>Pseudomonadota</taxon>
        <taxon>Alphaproteobacteria</taxon>
        <taxon>Hyphomicrobiales</taxon>
        <taxon>Brucellaceae</taxon>
        <taxon>Brucella/Ochrobactrum group</taxon>
        <taxon>Brucella</taxon>
    </lineage>
</organism>
<evidence type="ECO:0000255" key="1">
    <source>
        <dbReference type="HAMAP-Rule" id="MF_01240"/>
    </source>
</evidence>
<protein>
    <recommendedName>
        <fullName evidence="1">UPF0309 protein BruAb2_0323</fullName>
    </recommendedName>
</protein>
<accession>Q579C9</accession>
<gene>
    <name type="ordered locus">BruAb2_0323</name>
</gene>
<reference key="1">
    <citation type="journal article" date="2005" name="J. Bacteriol.">
        <title>Completion of the genome sequence of Brucella abortus and comparison to the highly similar genomes of Brucella melitensis and Brucella suis.</title>
        <authorList>
            <person name="Halling S.M."/>
            <person name="Peterson-Burch B.D."/>
            <person name="Bricker B.J."/>
            <person name="Zuerner R.L."/>
            <person name="Qing Z."/>
            <person name="Li L.-L."/>
            <person name="Kapur V."/>
            <person name="Alt D.P."/>
            <person name="Olsen S.C."/>
        </authorList>
    </citation>
    <scope>NUCLEOTIDE SEQUENCE [LARGE SCALE GENOMIC DNA]</scope>
    <source>
        <strain>9-941</strain>
    </source>
</reference>
<feature type="chain" id="PRO_1000066942" description="UPF0309 protein BruAb2_0323">
    <location>
        <begin position="1"/>
        <end position="242"/>
    </location>
</feature>
<feature type="domain" description="SIS" evidence="1">
    <location>
        <begin position="30"/>
        <end position="214"/>
    </location>
</feature>
<sequence>MTEITDRYFNDVIARLSGLRDRLAAQMEKAADLIAAAARADRRVYVFGTGHSHMMAEELHYRAGGLAITVPILCGSIMLQDGAVASSHFERIEGAVRPILDRYGIRDGDVLVVVSNSGVNAAPIEAARYAREKGAAIIALTSVAYSNTIARGRTQLLSLADVVLDNDAPSGDAVLEIAGSALKVGPVSTALGVTILNAVFADVAARLVGEGDAPIYLSANMPGSGDINRSLVERYRDHNPHL</sequence>
<dbReference type="EMBL" id="AE017224">
    <property type="protein sequence ID" value="AAX75755.1"/>
    <property type="molecule type" value="Genomic_DNA"/>
</dbReference>
<dbReference type="RefSeq" id="WP_002965737.1">
    <property type="nucleotide sequence ID" value="NC_006933.1"/>
</dbReference>
<dbReference type="SMR" id="Q579C9"/>
<dbReference type="EnsemblBacteria" id="AAX75755">
    <property type="protein sequence ID" value="AAX75755"/>
    <property type="gene ID" value="BruAb2_0323"/>
</dbReference>
<dbReference type="KEGG" id="bmb:BruAb2_0323"/>
<dbReference type="HOGENOM" id="CLU_089975_0_0_5"/>
<dbReference type="Proteomes" id="UP000000540">
    <property type="component" value="Chromosome II"/>
</dbReference>
<dbReference type="GO" id="GO:0097367">
    <property type="term" value="F:carbohydrate derivative binding"/>
    <property type="evidence" value="ECO:0007669"/>
    <property type="project" value="InterPro"/>
</dbReference>
<dbReference type="GO" id="GO:1901135">
    <property type="term" value="P:carbohydrate derivative metabolic process"/>
    <property type="evidence" value="ECO:0007669"/>
    <property type="project" value="InterPro"/>
</dbReference>
<dbReference type="CDD" id="cd05013">
    <property type="entry name" value="SIS_RpiR"/>
    <property type="match status" value="1"/>
</dbReference>
<dbReference type="Gene3D" id="3.40.50.10490">
    <property type="entry name" value="Glucose-6-phosphate isomerase like protein, domain 1"/>
    <property type="match status" value="1"/>
</dbReference>
<dbReference type="HAMAP" id="MF_01240">
    <property type="entry name" value="UPF0309"/>
    <property type="match status" value="1"/>
</dbReference>
<dbReference type="InterPro" id="IPR035472">
    <property type="entry name" value="RpiR-like_SIS"/>
</dbReference>
<dbReference type="InterPro" id="IPR001347">
    <property type="entry name" value="SIS_dom"/>
</dbReference>
<dbReference type="InterPro" id="IPR046348">
    <property type="entry name" value="SIS_dom_sf"/>
</dbReference>
<dbReference type="InterPro" id="IPR050099">
    <property type="entry name" value="SIS_GmhA/DiaA_subfam"/>
</dbReference>
<dbReference type="InterPro" id="IPR022951">
    <property type="entry name" value="UPF0309"/>
</dbReference>
<dbReference type="NCBIfam" id="NF002805">
    <property type="entry name" value="PRK02947.1"/>
    <property type="match status" value="1"/>
</dbReference>
<dbReference type="PANTHER" id="PTHR30390:SF7">
    <property type="entry name" value="PHOSPHOHEPTOSE ISOMERASE"/>
    <property type="match status" value="1"/>
</dbReference>
<dbReference type="PANTHER" id="PTHR30390">
    <property type="entry name" value="SEDOHEPTULOSE 7-PHOSPHATE ISOMERASE / DNAA INITIATOR-ASSOCIATING FACTOR FOR REPLICATION INITIATION"/>
    <property type="match status" value="1"/>
</dbReference>
<dbReference type="Pfam" id="PF13580">
    <property type="entry name" value="SIS_2"/>
    <property type="match status" value="1"/>
</dbReference>
<dbReference type="SUPFAM" id="SSF53697">
    <property type="entry name" value="SIS domain"/>
    <property type="match status" value="1"/>
</dbReference>
<dbReference type="PROSITE" id="PS51464">
    <property type="entry name" value="SIS"/>
    <property type="match status" value="1"/>
</dbReference>
<name>Y2623_BRUAB</name>